<organism>
    <name type="scientific">Thermococcus kodakarensis (strain ATCC BAA-918 / JCM 12380 / KOD1)</name>
    <name type="common">Pyrococcus kodakaraensis (strain KOD1)</name>
    <dbReference type="NCBI Taxonomy" id="69014"/>
    <lineage>
        <taxon>Archaea</taxon>
        <taxon>Methanobacteriati</taxon>
        <taxon>Methanobacteriota</taxon>
        <taxon>Thermococci</taxon>
        <taxon>Thermococcales</taxon>
        <taxon>Thermococcaceae</taxon>
        <taxon>Thermococcus</taxon>
    </lineage>
</organism>
<keyword id="KW-0002">3D-structure</keyword>
<keyword id="KW-0963">Cytoplasm</keyword>
<keyword id="KW-0903">Direct protein sequencing</keyword>
<keyword id="KW-0326">Glycosidase</keyword>
<keyword id="KW-0378">Hydrolase</keyword>
<keyword id="KW-1185">Reference proteome</keyword>
<sequence length="786" mass="90232">MGKVEFSGKRYVIDGEPVTIAGGTLQFFRVPADAWKDRLLKMREAGLNTVDTYVAWNWHEPEKGSFDFKGETHPQRNLVGFLELADELGFYVIIRPGPYICGEWRNGGIPDWLIDEHPEILAKGPNGPLPRDIYYPPITYLHPTYLEAVGEWYNAVFPVIRKYLYTNGGPIISVSIDDEPSYWETIFQPFLTDYNEIITKPGGLWEKWLEQNYTLEDLRRRYKGDFKDYSEIKVPTSFSEPLPKLIDWHHFKLWMINEYVRWIYERMAREFDVPISILDPYLLQVAWRHFFTYMREHNLKIHVWTEFWYSFYRSSDFKEDKLGHIYYKTGIYRYHVRKAGTPPLSIETQSSLAHTIDPTEAELLYSILPPLGIPNINYYLFVGGENPEGYESHNGITWDVYSPVGLDGSERPHFGVIKALSETMTSAEGLADAELRPKVAVGLYEPYEALNLWGYEGLEESTDLNEYLLGERGLFTLLAMSNTPFDAVDLEDVTLDELLSYDQLWVYSLDFMSREVQDKLVEFVARGGNLVILPMLPRYDENLEPYSSLKDFLGVEVEREKARRNPRLIQFLSVSAEGIDRMLVRNTVRGVRGGEPIAFLGEKPVGAFVRKGGGSAVVLGFRLQYYTSHHDLHRKFVWKLKELQGVREDFEVTNPDMIVLPMEGKGYAYLAVTNPRGHPIKGRISYRGLEVPVLLDGIELKRRGTLYLPFGVRKGDVEVAYATATLVMWEGDVLTFRNHLSGHSEIALKGVESVKVSGGKIVDGSDGEVLRIVIEHPGEYFEVELL</sequence>
<gene>
    <name evidence="4" type="primary">glmA</name>
    <name evidence="7" type="synonym">Tk-Glm</name>
    <name evidence="8" type="ordered locus">TK1754</name>
</gene>
<proteinExistence type="evidence at protein level"/>
<accession>Q76HN4</accession>
<accession>Q5JDU4</accession>
<dbReference type="EC" id="3.2.1.-" evidence="2 3"/>
<dbReference type="EMBL" id="AB100422">
    <property type="protein sequence ID" value="BAC82164.1"/>
    <property type="molecule type" value="Genomic_DNA"/>
</dbReference>
<dbReference type="EMBL" id="AP006878">
    <property type="protein sequence ID" value="BAD85943.1"/>
    <property type="molecule type" value="Genomic_DNA"/>
</dbReference>
<dbReference type="RefSeq" id="WP_011250705.1">
    <property type="nucleotide sequence ID" value="NC_006624.1"/>
</dbReference>
<dbReference type="PDB" id="5GSM">
    <property type="method" value="X-ray"/>
    <property type="resolution" value="1.27 A"/>
    <property type="chains" value="A/B=1-786"/>
</dbReference>
<dbReference type="PDBsum" id="5GSM"/>
<dbReference type="SMR" id="Q76HN4"/>
<dbReference type="STRING" id="69014.TK1754"/>
<dbReference type="CAZy" id="GH35">
    <property type="family name" value="Glycoside Hydrolase Family 35"/>
</dbReference>
<dbReference type="EnsemblBacteria" id="BAD85943">
    <property type="protein sequence ID" value="BAD85943"/>
    <property type="gene ID" value="TK1754"/>
</dbReference>
<dbReference type="GeneID" id="3235173"/>
<dbReference type="KEGG" id="tko:TK1754"/>
<dbReference type="PATRIC" id="fig|69014.16.peg.1710"/>
<dbReference type="eggNOG" id="arCOG05856">
    <property type="taxonomic scope" value="Archaea"/>
</dbReference>
<dbReference type="HOGENOM" id="CLU_395770_0_0_2"/>
<dbReference type="InParanoid" id="Q76HN4"/>
<dbReference type="OrthoDB" id="85141at2157"/>
<dbReference type="PhylomeDB" id="Q76HN4"/>
<dbReference type="BioCyc" id="MetaCyc:MONOMER-16777"/>
<dbReference type="BRENDA" id="3.2.1.165">
    <property type="organism ID" value="5246"/>
</dbReference>
<dbReference type="UniPathway" id="UPA00349"/>
<dbReference type="Proteomes" id="UP000000536">
    <property type="component" value="Chromosome"/>
</dbReference>
<dbReference type="GO" id="GO:0009341">
    <property type="term" value="C:beta-galactosidase complex"/>
    <property type="evidence" value="ECO:0007669"/>
    <property type="project" value="InterPro"/>
</dbReference>
<dbReference type="GO" id="GO:0005773">
    <property type="term" value="C:vacuole"/>
    <property type="evidence" value="ECO:0000318"/>
    <property type="project" value="GO_Central"/>
</dbReference>
<dbReference type="GO" id="GO:0102277">
    <property type="term" value="F:2-acetamido-4-O-(2-amino-2-deoxy-beta-D-glucopyranosyl)-2-deoxy-D-glucose exo-beta-D-glucosaminidase activity"/>
    <property type="evidence" value="ECO:0007669"/>
    <property type="project" value="RHEA"/>
</dbReference>
<dbReference type="GO" id="GO:0004565">
    <property type="term" value="F:beta-galactosidase activity"/>
    <property type="evidence" value="ECO:0000318"/>
    <property type="project" value="GO_Central"/>
</dbReference>
<dbReference type="GO" id="GO:0006032">
    <property type="term" value="P:chitin catabolic process"/>
    <property type="evidence" value="ECO:0007669"/>
    <property type="project" value="UniProtKB-UniPathway"/>
</dbReference>
<dbReference type="GO" id="GO:0019388">
    <property type="term" value="P:galactose catabolic process"/>
    <property type="evidence" value="ECO:0000318"/>
    <property type="project" value="GO_Central"/>
</dbReference>
<dbReference type="CDD" id="cd03143">
    <property type="entry name" value="A4_beta-galactosidase_middle_domain"/>
    <property type="match status" value="1"/>
</dbReference>
<dbReference type="Gene3D" id="3.40.50.880">
    <property type="match status" value="1"/>
</dbReference>
<dbReference type="Gene3D" id="3.20.20.80">
    <property type="entry name" value="Glycosidases"/>
    <property type="match status" value="1"/>
</dbReference>
<dbReference type="InterPro" id="IPR029062">
    <property type="entry name" value="Class_I_gatase-like"/>
</dbReference>
<dbReference type="InterPro" id="IPR053516">
    <property type="entry name" value="GLMA"/>
</dbReference>
<dbReference type="InterPro" id="IPR054747">
    <property type="entry name" value="GLMA-like_C"/>
</dbReference>
<dbReference type="InterPro" id="IPR054746">
    <property type="entry name" value="GLMA-like_second"/>
</dbReference>
<dbReference type="InterPro" id="IPR013529">
    <property type="entry name" value="Glyco_hydro_42_N"/>
</dbReference>
<dbReference type="InterPro" id="IPR001944">
    <property type="entry name" value="Glycoside_Hdrlase_35"/>
</dbReference>
<dbReference type="InterPro" id="IPR017853">
    <property type="entry name" value="Glycoside_hydrolase_SF"/>
</dbReference>
<dbReference type="NCBIfam" id="NF041127">
    <property type="entry name" value="exo_beta_glucsam"/>
    <property type="match status" value="1"/>
</dbReference>
<dbReference type="PANTHER" id="PTHR23421">
    <property type="entry name" value="BETA-GALACTOSIDASE RELATED"/>
    <property type="match status" value="1"/>
</dbReference>
<dbReference type="Pfam" id="PF22369">
    <property type="entry name" value="GLMA_2nd"/>
    <property type="match status" value="1"/>
</dbReference>
<dbReference type="Pfam" id="PF22345">
    <property type="entry name" value="GLMA_C"/>
    <property type="match status" value="1"/>
</dbReference>
<dbReference type="Pfam" id="PF02449">
    <property type="entry name" value="Glyco_hydro_42"/>
    <property type="match status" value="1"/>
</dbReference>
<dbReference type="PRINTS" id="PR00742">
    <property type="entry name" value="GLHYDRLASE35"/>
</dbReference>
<dbReference type="SUPFAM" id="SSF51445">
    <property type="entry name" value="(Trans)glycosidases"/>
    <property type="match status" value="1"/>
</dbReference>
<dbReference type="SUPFAM" id="SSF52317">
    <property type="entry name" value="Class I glutamine amidotransferase-like"/>
    <property type="match status" value="1"/>
</dbReference>
<evidence type="ECO:0000269" key="1">
    <source>
    </source>
</evidence>
<evidence type="ECO:0000269" key="2">
    <source>
    </source>
</evidence>
<evidence type="ECO:0000269" key="3">
    <source>
    </source>
</evidence>
<evidence type="ECO:0000303" key="4">
    <source>
    </source>
</evidence>
<evidence type="ECO:0000305" key="5"/>
<evidence type="ECO:0000305" key="6">
    <source>
    </source>
</evidence>
<evidence type="ECO:0000312" key="7">
    <source>
        <dbReference type="EMBL" id="BAC82164.1"/>
    </source>
</evidence>
<evidence type="ECO:0000312" key="8">
    <source>
        <dbReference type="EMBL" id="BAD85943.1"/>
    </source>
</evidence>
<evidence type="ECO:0007744" key="9">
    <source>
        <dbReference type="PDB" id="5GSM"/>
    </source>
</evidence>
<evidence type="ECO:0007829" key="10">
    <source>
        <dbReference type="PDB" id="5GSM"/>
    </source>
</evidence>
<reference key="1">
    <citation type="journal article" date="2003" name="J. Bacteriol.">
        <title>Characterization of an exo-beta-D-glucosaminidase involved in a novel chitinolytic pathway from the hyperthermophilic archaeon Thermococcus kodakaraensis KOD1.</title>
        <authorList>
            <person name="Tanaka T."/>
            <person name="Fukui T."/>
            <person name="Atomi H."/>
            <person name="Imanaka T."/>
        </authorList>
    </citation>
    <scope>NUCLEOTIDE SEQUENCE [GENOMIC DNA]</scope>
    <scope>PROTEIN SEQUENCE OF 2-11</scope>
    <scope>FUNCTION</scope>
    <scope>BIOPHYSICOCHEMICAL PROPERTIES</scope>
    <scope>PATHWAY</scope>
    <scope>SUBUNIT</scope>
    <scope>SUBCELLULAR LOCATION</scope>
    <scope>INDUCTION</scope>
    <source>
        <strain>ATCC BAA-918 / JCM 12380 / KOD1</strain>
    </source>
</reference>
<reference key="2">
    <citation type="journal article" date="2005" name="Genome Res.">
        <title>Complete genome sequence of the hyperthermophilic archaeon Thermococcus kodakaraensis KOD1 and comparison with Pyrococcus genomes.</title>
        <authorList>
            <person name="Fukui T."/>
            <person name="Atomi H."/>
            <person name="Kanai T."/>
            <person name="Matsumi R."/>
            <person name="Fujiwara S."/>
            <person name="Imanaka T."/>
        </authorList>
    </citation>
    <scope>NUCLEOTIDE SEQUENCE [LARGE SCALE GENOMIC DNA]</scope>
    <source>
        <strain>ATCC BAA-918 / JCM 12380 / KOD1</strain>
    </source>
</reference>
<reference key="3">
    <citation type="journal article" date="2004" name="J. Biol. Chem.">
        <title>Concerted action of diacetylchitobiose deacetylase and exo-beta-D-glucosaminidase in a novel chitinolytic pathway in the hyperthermophilic archaeon Thermococcus kodakaraensis KOD1.</title>
        <authorList>
            <person name="Tanaka T."/>
            <person name="Fukui T."/>
            <person name="Fujiwara S."/>
            <person name="Atomi H."/>
            <person name="Imanaka T."/>
        </authorList>
    </citation>
    <scope>FUNCTION</scope>
    <scope>CATALYTIC ACTIVITY</scope>
    <scope>PATHWAY</scope>
    <source>
        <strain>ATCC BAA-918 / JCM 12380 / KOD1</strain>
    </source>
</reference>
<reference evidence="9" key="4">
    <citation type="journal article" date="2017" name="J. Biol. Chem.">
        <title>The structure of an archaeal beta-glucosaminidase provides insight into glycoside hydrolase evolution.</title>
        <authorList>
            <person name="Mine S."/>
            <person name="Watanabe M."/>
            <person name="Kamachi S."/>
            <person name="Abe Y."/>
            <person name="Ueda T."/>
        </authorList>
    </citation>
    <scope>X-RAY CRYSTALLOGRAPHY (1.27 ANGSTROMS) IN COMPLEX WITH BETA-D-GLUCOSAMINE</scope>
    <scope>FUNCTION</scope>
    <scope>CATALYTIC ACTIVITY</scope>
    <scope>SUBUNIT</scope>
    <scope>MUTAGENESIS OF ASP-178; GLU-179; GLU-306 AND GLU-347</scope>
    <scope>ACTIVE SITE</scope>
</reference>
<comment type="function">
    <text evidence="1 2 3">Exo-type enzyme that specifically cleaves the non-reducing terminal glycosidic bond of chitooligosaccharides (PubMed:12923090, PubMed:15136574, PubMed:28130448). Catalyzes the hydrolysis of GlcN-GlcNAc to glucosamine (GlcN) and N-acetylglucosamine (GlcNAc) (PubMed:15136574, PubMed:28130448). Involved in chitin degradation (PubMed:12923090, PubMed:15136574). Can also hydrolyze reduced chitobiose (GlcN2OH) and chitooligosaccharides of various chain lengths (PubMed:12923090).</text>
</comment>
<comment type="catalytic activity">
    <reaction evidence="2 3">
        <text>beta-D-glucosaminyl-(1-&gt;4)-N-acetyl-D-glucosamine + H2O = D-glucosamine + N-acetyl-D-glucosamine</text>
        <dbReference type="Rhea" id="RHEA:62164"/>
        <dbReference type="ChEBI" id="CHEBI:15377"/>
        <dbReference type="ChEBI" id="CHEBI:58723"/>
        <dbReference type="ChEBI" id="CHEBI:145478"/>
        <dbReference type="ChEBI" id="CHEBI:506227"/>
    </reaction>
</comment>
<comment type="biophysicochemical properties">
    <kinetics>
        <KM evidence="1">1.37 mM for GlcN2</KM>
        <KM evidence="1">0.27 mM for GlcN3</KM>
        <KM evidence="1">0.295 mM for GlcN4</KM>
        <KM evidence="1">0.0778 mM for GlcN5</KM>
        <KM evidence="1">0.365 mM for GlcN6</KM>
        <Vmax evidence="1">98.7 umol/min/mg enzyme with GlcN2 as substrate</Vmax>
        <Vmax evidence="1">34.5 umol/min/mg enzyme with GlcN3 as substrate</Vmax>
        <Vmax evidence="1">41.7 umol/min/mg enzyme with GlcN4 as substrate</Vmax>
        <Vmax evidence="1">12.0 umol/min/mg enzyme with GlcN5 as substrate</Vmax>
        <Vmax evidence="1">35.1 umol/min/mg enzyme with GlcN6 as substrate</Vmax>
    </kinetics>
    <phDependence>
        <text evidence="1">Optimum pH is 6.0 (with reduced chitobiose as substrate).</text>
    </phDependence>
    <temperatureDependence>
        <text evidence="1">Optimum temperature is 80 degrees Celsius (with reduced chitobiose as substrate).</text>
    </temperatureDependence>
</comment>
<comment type="pathway">
    <text evidence="1 2">Glycan degradation; chitin degradation.</text>
</comment>
<comment type="subunit">
    <text evidence="1 3">Homodimer.</text>
</comment>
<comment type="subcellular location">
    <subcellularLocation>
        <location evidence="1">Cytoplasm</location>
    </subcellularLocation>
</comment>
<comment type="induction">
    <text evidence="1">Induced by GlcNAc(2). Also induced, to a lesser extent, by colloidal chitin.</text>
</comment>
<comment type="similarity">
    <text evidence="5">Belongs to the glycosyl hydrolase 35 family.</text>
</comment>
<feature type="initiator methionine" description="Removed" evidence="1">
    <location>
        <position position="1"/>
    </location>
</feature>
<feature type="chain" id="PRO_0000449121" description="Exo-beta-D-glucosaminidase">
    <location>
        <begin position="2"/>
        <end position="786"/>
    </location>
</feature>
<feature type="active site" description="Proton donor" evidence="6">
    <location>
        <position position="179"/>
    </location>
</feature>
<feature type="active site" description="Nucleophile" evidence="6">
    <location>
        <position position="347"/>
    </location>
</feature>
<feature type="binding site" evidence="3">
    <location>
        <position position="53"/>
    </location>
    <ligand>
        <name>substrate</name>
    </ligand>
</feature>
<feature type="binding site" evidence="3">
    <location>
        <begin position="102"/>
        <end position="103"/>
    </location>
    <ligand>
        <name>substrate</name>
    </ligand>
</feature>
<feature type="binding site" evidence="3">
    <location>
        <begin position="178"/>
        <end position="179"/>
    </location>
    <ligand>
        <name>substrate</name>
    </ligand>
</feature>
<feature type="binding site" evidence="3">
    <location>
        <position position="306"/>
    </location>
    <ligand>
        <name>substrate</name>
    </ligand>
</feature>
<feature type="binding site" evidence="3">
    <location>
        <position position="347"/>
    </location>
    <ligand>
        <name>substrate</name>
    </ligand>
</feature>
<feature type="binding site" evidence="3">
    <location>
        <position position="379"/>
    </location>
    <ligand>
        <name>substrate</name>
    </ligand>
</feature>
<feature type="mutagenesis site" description="Loss of activity." evidence="3">
    <original>D</original>
    <variation>N</variation>
    <location>
        <position position="178"/>
    </location>
</feature>
<feature type="mutagenesis site" description="Retains less than 3% of wild-type activity." evidence="3">
    <original>E</original>
    <variation>Q</variation>
    <location>
        <position position="179"/>
    </location>
</feature>
<feature type="mutagenesis site" description="Retains 40% of wild-type activity." evidence="3">
    <original>E</original>
    <variation>Q</variation>
    <location>
        <position position="306"/>
    </location>
</feature>
<feature type="mutagenesis site" description="Loss of activity." evidence="3">
    <original>E</original>
    <variation>Q</variation>
    <location>
        <position position="347"/>
    </location>
</feature>
<feature type="strand" evidence="10">
    <location>
        <begin position="4"/>
        <end position="7"/>
    </location>
</feature>
<feature type="strand" evidence="10">
    <location>
        <begin position="10"/>
        <end position="13"/>
    </location>
</feature>
<feature type="strand" evidence="10">
    <location>
        <begin position="21"/>
        <end position="24"/>
    </location>
</feature>
<feature type="helix" evidence="10">
    <location>
        <begin position="27"/>
        <end position="29"/>
    </location>
</feature>
<feature type="helix" evidence="10">
    <location>
        <begin position="32"/>
        <end position="34"/>
    </location>
</feature>
<feature type="helix" evidence="10">
    <location>
        <begin position="35"/>
        <end position="44"/>
    </location>
</feature>
<feature type="strand" evidence="10">
    <location>
        <begin position="49"/>
        <end position="53"/>
    </location>
</feature>
<feature type="helix" evidence="10">
    <location>
        <begin position="56"/>
        <end position="59"/>
    </location>
</feature>
<feature type="strand" evidence="10">
    <location>
        <begin position="68"/>
        <end position="72"/>
    </location>
</feature>
<feature type="helix" evidence="10">
    <location>
        <begin position="74"/>
        <end position="76"/>
    </location>
</feature>
<feature type="helix" evidence="10">
    <location>
        <begin position="78"/>
        <end position="87"/>
    </location>
</feature>
<feature type="strand" evidence="10">
    <location>
        <begin position="91"/>
        <end position="95"/>
    </location>
</feature>
<feature type="helix" evidence="10">
    <location>
        <begin position="105"/>
        <end position="108"/>
    </location>
</feature>
<feature type="helix" evidence="10">
    <location>
        <begin position="111"/>
        <end position="116"/>
    </location>
</feature>
<feature type="helix" evidence="10">
    <location>
        <begin position="118"/>
        <end position="120"/>
    </location>
</feature>
<feature type="strand" evidence="10">
    <location>
        <begin position="131"/>
        <end position="135"/>
    </location>
</feature>
<feature type="helix" evidence="10">
    <location>
        <begin position="143"/>
        <end position="162"/>
    </location>
</feature>
<feature type="helix" evidence="10">
    <location>
        <begin position="165"/>
        <end position="167"/>
    </location>
</feature>
<feature type="strand" evidence="10">
    <location>
        <begin position="169"/>
        <end position="175"/>
    </location>
</feature>
<feature type="strand" evidence="10">
    <location>
        <begin position="177"/>
        <end position="179"/>
    </location>
</feature>
<feature type="turn" evidence="10">
    <location>
        <begin position="182"/>
        <end position="187"/>
    </location>
</feature>
<feature type="turn" evidence="10">
    <location>
        <begin position="189"/>
        <end position="191"/>
    </location>
</feature>
<feature type="helix" evidence="10">
    <location>
        <begin position="196"/>
        <end position="199"/>
    </location>
</feature>
<feature type="helix" evidence="10">
    <location>
        <begin position="204"/>
        <end position="212"/>
    </location>
</feature>
<feature type="helix" evidence="10">
    <location>
        <begin position="215"/>
        <end position="222"/>
    </location>
</feature>
<feature type="helix" evidence="10">
    <location>
        <begin position="229"/>
        <end position="231"/>
    </location>
</feature>
<feature type="helix" evidence="10">
    <location>
        <begin position="242"/>
        <end position="270"/>
    </location>
</feature>
<feature type="strand" evidence="10">
    <location>
        <begin position="275"/>
        <end position="278"/>
    </location>
</feature>
<feature type="helix" evidence="10">
    <location>
        <begin position="280"/>
        <end position="282"/>
    </location>
</feature>
<feature type="helix" evidence="10">
    <location>
        <begin position="287"/>
        <end position="296"/>
    </location>
</feature>
<feature type="strand" evidence="10">
    <location>
        <begin position="301"/>
        <end position="307"/>
    </location>
</feature>
<feature type="helix" evidence="10">
    <location>
        <begin position="319"/>
        <end position="321"/>
    </location>
</feature>
<feature type="helix" evidence="10">
    <location>
        <begin position="322"/>
        <end position="339"/>
    </location>
</feature>
<feature type="strand" evidence="10">
    <location>
        <begin position="344"/>
        <end position="349"/>
    </location>
</feature>
<feature type="strand" evidence="10">
    <location>
        <begin position="351"/>
        <end position="355"/>
    </location>
</feature>
<feature type="helix" evidence="10">
    <location>
        <begin position="358"/>
        <end position="367"/>
    </location>
</feature>
<feature type="turn" evidence="10">
    <location>
        <begin position="368"/>
        <end position="372"/>
    </location>
</feature>
<feature type="strand" evidence="10">
    <location>
        <begin position="375"/>
        <end position="379"/>
    </location>
</feature>
<feature type="turn" evidence="10">
    <location>
        <begin position="393"/>
        <end position="396"/>
    </location>
</feature>
<feature type="helix" evidence="10">
    <location>
        <begin position="412"/>
        <end position="426"/>
    </location>
</feature>
<feature type="turn" evidence="10">
    <location>
        <begin position="428"/>
        <end position="432"/>
    </location>
</feature>
<feature type="strand" evidence="10">
    <location>
        <begin position="438"/>
        <end position="443"/>
    </location>
</feature>
<feature type="helix" evidence="10">
    <location>
        <begin position="445"/>
        <end position="453"/>
    </location>
</feature>
<feature type="strand" evidence="10">
    <location>
        <begin position="458"/>
        <end position="460"/>
    </location>
</feature>
<feature type="helix" evidence="10">
    <location>
        <begin position="464"/>
        <end position="467"/>
    </location>
</feature>
<feature type="helix" evidence="10">
    <location>
        <begin position="474"/>
        <end position="480"/>
    </location>
</feature>
<feature type="strand" evidence="10">
    <location>
        <begin position="485"/>
        <end position="489"/>
    </location>
</feature>
<feature type="turn" evidence="10">
    <location>
        <begin position="490"/>
        <end position="492"/>
    </location>
</feature>
<feature type="helix" evidence="10">
    <location>
        <begin position="495"/>
        <end position="499"/>
    </location>
</feature>
<feature type="strand" evidence="10">
    <location>
        <begin position="501"/>
        <end position="507"/>
    </location>
</feature>
<feature type="helix" evidence="10">
    <location>
        <begin position="514"/>
        <end position="525"/>
    </location>
</feature>
<feature type="strand" evidence="10">
    <location>
        <begin position="529"/>
        <end position="534"/>
    </location>
</feature>
<feature type="helix" evidence="10">
    <location>
        <begin position="548"/>
        <end position="553"/>
    </location>
</feature>
<feature type="helix" evidence="10">
    <location>
        <begin position="566"/>
        <end position="568"/>
    </location>
</feature>
<feature type="strand" evidence="10">
    <location>
        <begin position="571"/>
        <end position="576"/>
    </location>
</feature>
<feature type="strand" evidence="10">
    <location>
        <begin position="579"/>
        <end position="586"/>
    </location>
</feature>
<feature type="strand" evidence="10">
    <location>
        <begin position="591"/>
        <end position="600"/>
    </location>
</feature>
<feature type="strand" evidence="10">
    <location>
        <begin position="603"/>
        <end position="611"/>
    </location>
</feature>
<feature type="strand" evidence="10">
    <location>
        <begin position="614"/>
        <end position="622"/>
    </location>
</feature>
<feature type="helix" evidence="10">
    <location>
        <begin position="632"/>
        <end position="643"/>
    </location>
</feature>
<feature type="strand" evidence="10">
    <location>
        <begin position="649"/>
        <end position="654"/>
    </location>
</feature>
<feature type="strand" evidence="10">
    <location>
        <begin position="657"/>
        <end position="663"/>
    </location>
</feature>
<feature type="strand" evidence="10">
    <location>
        <begin position="668"/>
        <end position="673"/>
    </location>
</feature>
<feature type="strand" evidence="10">
    <location>
        <begin position="680"/>
        <end position="682"/>
    </location>
</feature>
<feature type="strand" evidence="10">
    <location>
        <begin position="684"/>
        <end position="686"/>
    </location>
</feature>
<feature type="strand" evidence="10">
    <location>
        <begin position="689"/>
        <end position="691"/>
    </location>
</feature>
<feature type="strand" evidence="10">
    <location>
        <begin position="693"/>
        <end position="696"/>
    </location>
</feature>
<feature type="strand" evidence="10">
    <location>
        <begin position="698"/>
        <end position="700"/>
    </location>
</feature>
<feature type="strand" evidence="10">
    <location>
        <begin position="705"/>
        <end position="714"/>
    </location>
</feature>
<feature type="strand" evidence="10">
    <location>
        <begin position="717"/>
        <end position="730"/>
    </location>
</feature>
<feature type="strand" evidence="10">
    <location>
        <begin position="733"/>
        <end position="737"/>
    </location>
</feature>
<feature type="strand" evidence="10">
    <location>
        <begin position="740"/>
        <end position="750"/>
    </location>
</feature>
<feature type="strand" evidence="10">
    <location>
        <begin position="754"/>
        <end position="765"/>
    </location>
</feature>
<feature type="strand" evidence="10">
    <location>
        <begin position="767"/>
        <end position="775"/>
    </location>
</feature>
<feature type="strand" evidence="10">
    <location>
        <begin position="777"/>
        <end position="785"/>
    </location>
</feature>
<protein>
    <recommendedName>
        <fullName evidence="4">Exo-beta-D-glucosaminidase</fullName>
        <ecNumber evidence="2 3">3.2.1.-</ecNumber>
    </recommendedName>
    <alternativeName>
        <fullName evidence="4">GlcNase</fullName>
    </alternativeName>
</protein>
<name>GLMA_THEKO</name>